<accession>P47566</accession>
<accession>Q49192</accession>
<proteinExistence type="inferred from homology"/>
<keyword id="KW-0031">Aminopeptidase</keyword>
<keyword id="KW-0378">Hydrolase</keyword>
<keyword id="KW-0464">Manganese</keyword>
<keyword id="KW-0479">Metal-binding</keyword>
<keyword id="KW-0482">Metalloprotease</keyword>
<keyword id="KW-0645">Protease</keyword>
<keyword id="KW-1185">Reference proteome</keyword>
<dbReference type="EC" id="3.4.11.9"/>
<dbReference type="EMBL" id="L43967">
    <property type="protein sequence ID" value="AAC71546.1"/>
    <property type="molecule type" value="Genomic_DNA"/>
</dbReference>
<dbReference type="EMBL" id="U01755">
    <property type="protein sequence ID" value="AAD10569.1"/>
    <property type="molecule type" value="Genomic_DNA"/>
</dbReference>
<dbReference type="EMBL" id="U01717">
    <property type="protein sequence ID" value="AAC43191.1"/>
    <property type="status" value="ALT_TERM"/>
    <property type="molecule type" value="Unassigned_DNA"/>
</dbReference>
<dbReference type="PIR" id="H64235">
    <property type="entry name" value="H64235"/>
</dbReference>
<dbReference type="RefSeq" id="WP_009885960.1">
    <property type="nucleotide sequence ID" value="NC_000908.2"/>
</dbReference>
<dbReference type="SMR" id="P47566"/>
<dbReference type="FunCoup" id="P47566">
    <property type="interactions" value="185"/>
</dbReference>
<dbReference type="STRING" id="243273.MG_324"/>
<dbReference type="MEROPS" id="M24.008"/>
<dbReference type="GeneID" id="88282497"/>
<dbReference type="KEGG" id="mge:MG_324"/>
<dbReference type="eggNOG" id="COG0006">
    <property type="taxonomic scope" value="Bacteria"/>
</dbReference>
<dbReference type="HOGENOM" id="CLU_017266_4_0_14"/>
<dbReference type="InParanoid" id="P47566"/>
<dbReference type="OrthoDB" id="9806388at2"/>
<dbReference type="BioCyc" id="MGEN243273:G1GJ2-406-MONOMER"/>
<dbReference type="Proteomes" id="UP000000807">
    <property type="component" value="Chromosome"/>
</dbReference>
<dbReference type="GO" id="GO:0005829">
    <property type="term" value="C:cytosol"/>
    <property type="evidence" value="ECO:0000318"/>
    <property type="project" value="GO_Central"/>
</dbReference>
<dbReference type="GO" id="GO:0004177">
    <property type="term" value="F:aminopeptidase activity"/>
    <property type="evidence" value="ECO:0000318"/>
    <property type="project" value="GO_Central"/>
</dbReference>
<dbReference type="GO" id="GO:0046872">
    <property type="term" value="F:metal ion binding"/>
    <property type="evidence" value="ECO:0007669"/>
    <property type="project" value="UniProtKB-KW"/>
</dbReference>
<dbReference type="GO" id="GO:0008237">
    <property type="term" value="F:metallopeptidase activity"/>
    <property type="evidence" value="ECO:0007669"/>
    <property type="project" value="UniProtKB-KW"/>
</dbReference>
<dbReference type="GO" id="GO:0006508">
    <property type="term" value="P:proteolysis"/>
    <property type="evidence" value="ECO:0000318"/>
    <property type="project" value="GO_Central"/>
</dbReference>
<dbReference type="CDD" id="cd01092">
    <property type="entry name" value="APP-like"/>
    <property type="match status" value="1"/>
</dbReference>
<dbReference type="Gene3D" id="3.90.230.10">
    <property type="entry name" value="Creatinase/methionine aminopeptidase superfamily"/>
    <property type="match status" value="1"/>
</dbReference>
<dbReference type="Gene3D" id="3.40.350.10">
    <property type="entry name" value="Creatinase/prolidase N-terminal domain"/>
    <property type="match status" value="1"/>
</dbReference>
<dbReference type="InterPro" id="IPR029149">
    <property type="entry name" value="Creatin/AminoP/Spt16_N"/>
</dbReference>
<dbReference type="InterPro" id="IPR036005">
    <property type="entry name" value="Creatinase/aminopeptidase-like"/>
</dbReference>
<dbReference type="InterPro" id="IPR000587">
    <property type="entry name" value="Creatinase_N"/>
</dbReference>
<dbReference type="InterPro" id="IPR000994">
    <property type="entry name" value="Pept_M24"/>
</dbReference>
<dbReference type="InterPro" id="IPR050659">
    <property type="entry name" value="Peptidase_M24B"/>
</dbReference>
<dbReference type="InterPro" id="IPR001131">
    <property type="entry name" value="Peptidase_M24B_aminopep-P_CS"/>
</dbReference>
<dbReference type="PANTHER" id="PTHR46112">
    <property type="entry name" value="AMINOPEPTIDASE"/>
    <property type="match status" value="1"/>
</dbReference>
<dbReference type="PANTHER" id="PTHR46112:SF2">
    <property type="entry name" value="XAA-PRO AMINOPEPTIDASE P-RELATED"/>
    <property type="match status" value="1"/>
</dbReference>
<dbReference type="Pfam" id="PF01321">
    <property type="entry name" value="Creatinase_N"/>
    <property type="match status" value="1"/>
</dbReference>
<dbReference type="Pfam" id="PF00557">
    <property type="entry name" value="Peptidase_M24"/>
    <property type="match status" value="1"/>
</dbReference>
<dbReference type="SUPFAM" id="SSF55920">
    <property type="entry name" value="Creatinase/aminopeptidase"/>
    <property type="match status" value="1"/>
</dbReference>
<dbReference type="SUPFAM" id="SSF53092">
    <property type="entry name" value="Creatinase/prolidase N-terminal domain"/>
    <property type="match status" value="1"/>
</dbReference>
<dbReference type="PROSITE" id="PS00491">
    <property type="entry name" value="PROLINE_PEPTIDASE"/>
    <property type="match status" value="1"/>
</dbReference>
<comment type="catalytic activity">
    <reaction>
        <text>Release of any N-terminal amino acid, including proline, that is linked to proline, even from a dipeptide or tripeptide.</text>
        <dbReference type="EC" id="3.4.11.9"/>
    </reaction>
</comment>
<comment type="cofactor">
    <cofactor evidence="1">
        <name>Mn(2+)</name>
        <dbReference type="ChEBI" id="CHEBI:29035"/>
    </cofactor>
    <text evidence="1">Binds 2 manganese ions per subunit.</text>
</comment>
<comment type="similarity">
    <text evidence="2">Belongs to the peptidase M24B family.</text>
</comment>
<sequence length="354" mass="39815">MISELQQKITVLKDLLKTNKADAILIGSDQNRFWLTNFPSSAGWLIITSNKAKLFIDGRYYEAARNFINPIVEVELFVSFKQVKAFCESNGINHLLIEGDYLTFNYQDWIQAICKQYTVINAQEIRRVKLPSEIQAIEKAVDITRKVAVKLKRFIKPKMTELFISQWITNELVKQGGAKNSFDPIVATGKNGANPHHKPTKTIVKEGDFITCDFGTIYNGYCSDITRTFLVGKKPKSAKLLSAYKKVEEANLAGINAVNTTLTGSQVDKVCRDIIENSEFKDFFVHSTGHGVGIDIHEMPNVSQSYNKLLCENGVVTIEPGIYIPNLGGIRIEDMVLVKKEKSVWLSKSIPRAF</sequence>
<organism>
    <name type="scientific">Mycoplasma genitalium (strain ATCC 33530 / DSM 19775 / NCTC 10195 / G37)</name>
    <name type="common">Mycoplasmoides genitalium</name>
    <dbReference type="NCBI Taxonomy" id="243273"/>
    <lineage>
        <taxon>Bacteria</taxon>
        <taxon>Bacillati</taxon>
        <taxon>Mycoplasmatota</taxon>
        <taxon>Mycoplasmoidales</taxon>
        <taxon>Mycoplasmoidaceae</taxon>
        <taxon>Mycoplasmoides</taxon>
    </lineage>
</organism>
<protein>
    <recommendedName>
        <fullName>Putative Xaa-Pro aminopeptidase</fullName>
        <shortName>X-Pro aminopeptidase</shortName>
        <ecNumber>3.4.11.9</ecNumber>
    </recommendedName>
    <alternativeName>
        <fullName>Aminoacylproline aminopeptidase</fullName>
    </alternativeName>
    <alternativeName>
        <fullName>Aminopeptidase P</fullName>
        <shortName>APP</shortName>
    </alternativeName>
</protein>
<name>AMPP_MYCGE</name>
<evidence type="ECO:0000250" key="1"/>
<evidence type="ECO:0000305" key="2"/>
<reference key="1">
    <citation type="journal article" date="1995" name="Science">
        <title>The minimal gene complement of Mycoplasma genitalium.</title>
        <authorList>
            <person name="Fraser C.M."/>
            <person name="Gocayne J.D."/>
            <person name="White O."/>
            <person name="Adams M.D."/>
            <person name="Clayton R.A."/>
            <person name="Fleischmann R.D."/>
            <person name="Bult C.J."/>
            <person name="Kerlavage A.R."/>
            <person name="Sutton G.G."/>
            <person name="Kelley J.M."/>
            <person name="Fritchman J.L."/>
            <person name="Weidman J.F."/>
            <person name="Small K.V."/>
            <person name="Sandusky M."/>
            <person name="Fuhrmann J.L."/>
            <person name="Nguyen D.T."/>
            <person name="Utterback T.R."/>
            <person name="Saudek D.M."/>
            <person name="Phillips C.A."/>
            <person name="Merrick J.M."/>
            <person name="Tomb J.-F."/>
            <person name="Dougherty B.A."/>
            <person name="Bott K.F."/>
            <person name="Hu P.-C."/>
            <person name="Lucier T.S."/>
            <person name="Peterson S.N."/>
            <person name="Smith H.O."/>
            <person name="Hutchison C.A. III"/>
            <person name="Venter J.C."/>
        </authorList>
    </citation>
    <scope>NUCLEOTIDE SEQUENCE [LARGE SCALE GENOMIC DNA]</scope>
    <source>
        <strain>ATCC 33530 / DSM 19775 / NCTC 10195 / G37</strain>
    </source>
</reference>
<reference key="2">
    <citation type="journal article" date="1993" name="J. Bacteriol.">
        <title>A survey of the Mycoplasma genitalium genome by using random sequencing.</title>
        <authorList>
            <person name="Peterson S.N."/>
            <person name="Hu P.-C."/>
            <person name="Bott K.F."/>
            <person name="Hutchison C.A. III"/>
        </authorList>
    </citation>
    <scope>NUCLEOTIDE SEQUENCE [GENOMIC DNA] OF 297-354</scope>
    <source>
        <strain>ATCC 33530 / DSM 19775 / NCTC 10195 / G37</strain>
    </source>
</reference>
<gene>
    <name type="primary">pepP</name>
    <name type="ordered locus">MG324</name>
</gene>
<feature type="chain" id="PRO_0000185077" description="Putative Xaa-Pro aminopeptidase">
    <location>
        <begin position="1"/>
        <end position="354"/>
    </location>
</feature>
<feature type="binding site" evidence="1">
    <location>
        <position position="213"/>
    </location>
    <ligand>
        <name>Mn(2+)</name>
        <dbReference type="ChEBI" id="CHEBI:29035"/>
        <label>2</label>
    </ligand>
</feature>
<feature type="binding site" evidence="1">
    <location>
        <position position="224"/>
    </location>
    <ligand>
        <name>Mn(2+)</name>
        <dbReference type="ChEBI" id="CHEBI:29035"/>
        <label>1</label>
    </ligand>
</feature>
<feature type="binding site" evidence="1">
    <location>
        <position position="224"/>
    </location>
    <ligand>
        <name>Mn(2+)</name>
        <dbReference type="ChEBI" id="CHEBI:29035"/>
        <label>2</label>
    </ligand>
</feature>
<feature type="binding site" evidence="1">
    <location>
        <position position="290"/>
    </location>
    <ligand>
        <name>Mn(2+)</name>
        <dbReference type="ChEBI" id="CHEBI:29035"/>
        <label>1</label>
    </ligand>
</feature>
<feature type="binding site" evidence="1">
    <location>
        <position position="319"/>
    </location>
    <ligand>
        <name>Mn(2+)</name>
        <dbReference type="ChEBI" id="CHEBI:29035"/>
        <label>1</label>
    </ligand>
</feature>
<feature type="binding site" evidence="1">
    <location>
        <position position="333"/>
    </location>
    <ligand>
        <name>Mn(2+)</name>
        <dbReference type="ChEBI" id="CHEBI:29035"/>
        <label>1</label>
    </ligand>
</feature>
<feature type="binding site" evidence="1">
    <location>
        <position position="333"/>
    </location>
    <ligand>
        <name>Mn(2+)</name>
        <dbReference type="ChEBI" id="CHEBI:29035"/>
        <label>2</label>
    </ligand>
</feature>